<proteinExistence type="inferred from homology"/>
<keyword id="KW-0963">Cytoplasm</keyword>
<keyword id="KW-0206">Cytoskeleton</keyword>
<keyword id="KW-0342">GTP-binding</keyword>
<keyword id="KW-0378">Hydrolase</keyword>
<keyword id="KW-0460">Magnesium</keyword>
<keyword id="KW-0479">Metal-binding</keyword>
<keyword id="KW-0493">Microtubule</keyword>
<keyword id="KW-0547">Nucleotide-binding</keyword>
<keyword id="KW-1185">Reference proteome</keyword>
<name>TBA1_ENTH1</name>
<feature type="chain" id="PRO_0000048169" description="Tubulin alpha chain">
    <location>
        <begin position="1"/>
        <end position="455"/>
    </location>
</feature>
<feature type="active site" evidence="1">
    <location>
        <position position="259"/>
    </location>
</feature>
<feature type="binding site" evidence="1">
    <location>
        <position position="11"/>
    </location>
    <ligand>
        <name>GTP</name>
        <dbReference type="ChEBI" id="CHEBI:37565"/>
    </ligand>
</feature>
<feature type="binding site" evidence="1">
    <location>
        <position position="77"/>
    </location>
    <ligand>
        <name>GTP</name>
        <dbReference type="ChEBI" id="CHEBI:37565"/>
    </ligand>
</feature>
<feature type="binding site" evidence="1">
    <location>
        <position position="77"/>
    </location>
    <ligand>
        <name>Mg(2+)</name>
        <dbReference type="ChEBI" id="CHEBI:18420"/>
    </ligand>
</feature>
<feature type="binding site" evidence="1">
    <location>
        <position position="145"/>
    </location>
    <ligand>
        <name>GTP</name>
        <dbReference type="ChEBI" id="CHEBI:37565"/>
    </ligand>
</feature>
<feature type="binding site" evidence="1">
    <location>
        <position position="149"/>
    </location>
    <ligand>
        <name>GTP</name>
        <dbReference type="ChEBI" id="CHEBI:37565"/>
    </ligand>
</feature>
<feature type="binding site" evidence="1">
    <location>
        <position position="150"/>
    </location>
    <ligand>
        <name>GTP</name>
        <dbReference type="ChEBI" id="CHEBI:37565"/>
    </ligand>
</feature>
<feature type="binding site" evidence="1">
    <location>
        <position position="184"/>
    </location>
    <ligand>
        <name>GTP</name>
        <dbReference type="ChEBI" id="CHEBI:37565"/>
    </ligand>
</feature>
<feature type="binding site" evidence="1">
    <location>
        <position position="211"/>
    </location>
    <ligand>
        <name>GTP</name>
        <dbReference type="ChEBI" id="CHEBI:37565"/>
    </ligand>
</feature>
<feature type="binding site" evidence="1">
    <location>
        <position position="233"/>
    </location>
    <ligand>
        <name>GTP</name>
        <dbReference type="ChEBI" id="CHEBI:37565"/>
    </ligand>
</feature>
<feature type="sequence conflict" description="In Ref. 1; AAA57315." evidence="3" ref="1">
    <original>S</original>
    <variation>C</variation>
    <location>
        <position position="90"/>
    </location>
</feature>
<evidence type="ECO:0000250" key="1">
    <source>
        <dbReference type="UniProtKB" id="P68363"/>
    </source>
</evidence>
<evidence type="ECO:0000303" key="2">
    <source>
    </source>
</evidence>
<evidence type="ECO:0000305" key="3"/>
<evidence type="ECO:0000312" key="4">
    <source>
        <dbReference type="EMBL" id="AAA57315.1"/>
    </source>
</evidence>
<evidence type="ECO:0000312" key="5">
    <source>
        <dbReference type="EMBL" id="EAL48031.1"/>
    </source>
</evidence>
<sequence length="455" mass="50259">MREVITINIGQAGCQLGNKCWELFCLEHGIQPDGTAIANSNEKRSVITGGIDTAYNAFFQELQNGRHVPRAIFVDTEPTVIDEIKTGEYSGLYHPEHLICGKEDASSNFAKGKTGYEPLLNQTMDAIRKATENCTGLQGFFIYNSVGGGTGSGFTAALCEKLADKYTKKTKLNTVIWPSPKLSSGVVEPYNAVLNTHAMMKFVNCTFMVDNESIYKICQKQLGVHSPSYFHLNQLIAQAMSSITASLRFEGTLNVDLNEFPTNLVPFPRDHFAMMSYAPIVTPEKAIRQTLSVQELTSSLFDPNSLMIQCDDINKGKFMSCCMMYRGDVSSREVNLAVSGIKKQNTVPFVGWCPCSFKCGINSQPATAVPGSSYASTARSACMIANHTAMCQVFQKVNQNFDLMFGKRAFVHHYVGEGMEENEFTDARQDLYELEVDYANLALDNTIEGESMTAQ</sequence>
<reference evidence="4" key="1">
    <citation type="journal article" date="1994" name="Gene">
        <title>Cloning, genomic organization and transcription of the Entamoeba histolytica alpha-tubulin-encoding gene.</title>
        <authorList>
            <person name="Sanchez M.A."/>
            <person name="Peattie D.A."/>
            <person name="Wirth D."/>
            <person name="Orozco E."/>
        </authorList>
    </citation>
    <scope>NUCLEOTIDE SEQUENCE [GENOMIC DNA]</scope>
    <source>
        <strain evidence="4">ATCC 30459 / HM-1:IMSS / ABRM</strain>
    </source>
</reference>
<reference evidence="5" key="2">
    <citation type="journal article" date="2005" name="Nature">
        <title>The genome of the protist parasite Entamoeba histolytica.</title>
        <authorList>
            <person name="Loftus B.J."/>
            <person name="Anderson I."/>
            <person name="Davies R."/>
            <person name="Alsmark U.C."/>
            <person name="Samuelson J."/>
            <person name="Amedeo P."/>
            <person name="Roncaglia P."/>
            <person name="Berriman M."/>
            <person name="Hirt R.P."/>
            <person name="Mann B.J."/>
            <person name="Nozaki T."/>
            <person name="Suh B."/>
            <person name="Pop M."/>
            <person name="Duchene M."/>
            <person name="Ackers J."/>
            <person name="Tannich E."/>
            <person name="Leippe M."/>
            <person name="Hofer M."/>
            <person name="Bruchhaus I."/>
            <person name="Willhoeft U."/>
            <person name="Bhattacharya A."/>
            <person name="Chillingworth T."/>
            <person name="Churcher C.M."/>
            <person name="Hance Z."/>
            <person name="Harris B."/>
            <person name="Harris D."/>
            <person name="Jagels K."/>
            <person name="Moule S."/>
            <person name="Mungall K.L."/>
            <person name="Ormond D."/>
            <person name="Squares R."/>
            <person name="Whitehead S."/>
            <person name="Quail M.A."/>
            <person name="Rabbinowitsch E."/>
            <person name="Norbertczak H."/>
            <person name="Price C."/>
            <person name="Wang Z."/>
            <person name="Guillen N."/>
            <person name="Gilchrist C."/>
            <person name="Stroup S.E."/>
            <person name="Bhattacharya S."/>
            <person name="Lohia A."/>
            <person name="Foster P.G."/>
            <person name="Sicheritz-Ponten T."/>
            <person name="Weber C."/>
            <person name="Singh U."/>
            <person name="Mukherjee C."/>
            <person name="El-Sayed N.M.A."/>
            <person name="Petri W.A."/>
            <person name="Clark C.G."/>
            <person name="Embley T.M."/>
            <person name="Barrell B.G."/>
            <person name="Fraser C.M."/>
            <person name="Hall N."/>
        </authorList>
    </citation>
    <scope>NUCLEOTIDE SEQUENCE [LARGE SCALE GENOMIC DNA]</scope>
    <source>
        <strain evidence="5">ATCC 30459 / HM-1:IMSS / ABRM</strain>
    </source>
</reference>
<accession>P31017</accession>
<accession>A0A175JPF8</accession>
<accession>C4M2N0</accession>
<comment type="function">
    <text>Tubulin is the major constituent of microtubules, a cylinder consisting of laterally associated linear protofilaments composed of alpha- and beta-tubulin heterodimers. Microtubules grow by the addition of GTP-tubulin dimers to the microtubule end, where a stabilizing cap forms. Below the cap, tubulin dimers are in GDP-bound state, owing to GTPase activity of alpha-tubulin.</text>
</comment>
<comment type="catalytic activity">
    <reaction evidence="1">
        <text>GTP + H2O = GDP + phosphate + H(+)</text>
        <dbReference type="Rhea" id="RHEA:19669"/>
        <dbReference type="ChEBI" id="CHEBI:15377"/>
        <dbReference type="ChEBI" id="CHEBI:15378"/>
        <dbReference type="ChEBI" id="CHEBI:37565"/>
        <dbReference type="ChEBI" id="CHEBI:43474"/>
        <dbReference type="ChEBI" id="CHEBI:58189"/>
    </reaction>
    <physiologicalReaction direction="left-to-right" evidence="1">
        <dbReference type="Rhea" id="RHEA:19670"/>
    </physiologicalReaction>
</comment>
<comment type="cofactor">
    <cofactor evidence="1">
        <name>Mg(2+)</name>
        <dbReference type="ChEBI" id="CHEBI:18420"/>
    </cofactor>
</comment>
<comment type="subunit">
    <text>Dimer of alpha and beta chains. A typical microtubule is a hollow water-filled tube with an outer diameter of 25 nm and an inner diameter of 15 nM. Alpha-beta heterodimers associate head-to-tail to form protofilaments running lengthwise along the microtubule wall with the beta-tubulin subunit facing the microtubule plus end conferring a structural polarity. Microtubules usually have 13 protofilaments but different protofilament numbers can be found in some organisms and specialized cells.</text>
</comment>
<comment type="subcellular location">
    <subcellularLocation>
        <location>Cytoplasm</location>
        <location>Cytoskeleton</location>
    </subcellularLocation>
</comment>
<comment type="similarity">
    <text evidence="3">Belongs to the tubulin family.</text>
</comment>
<organism evidence="5">
    <name type="scientific">Entamoeba histolytica (strain ATCC 30459 / HM-1:IMSS / ABRM)</name>
    <dbReference type="NCBI Taxonomy" id="294381"/>
    <lineage>
        <taxon>Eukaryota</taxon>
        <taxon>Amoebozoa</taxon>
        <taxon>Evosea</taxon>
        <taxon>Archamoebae</taxon>
        <taxon>Mastigamoebida</taxon>
        <taxon>Entamoebidae</taxon>
        <taxon>Entamoeba</taxon>
    </lineage>
</organism>
<dbReference type="EC" id="3.6.5.-" evidence="1"/>
<dbReference type="EMBL" id="L07898">
    <property type="protein sequence ID" value="AAA57315.1"/>
    <property type="molecule type" value="Genomic_DNA"/>
</dbReference>
<dbReference type="EMBL" id="DS571227">
    <property type="protein sequence ID" value="EAL48031.1"/>
    <property type="molecule type" value="Genomic_DNA"/>
</dbReference>
<dbReference type="RefSeq" id="XP_653419.1">
    <property type="nucleotide sequence ID" value="XM_648327.1"/>
</dbReference>
<dbReference type="SMR" id="P31017"/>
<dbReference type="STRING" id="5759.C4M2N0"/>
<dbReference type="EnsemblProtists" id="GAT95537">
    <property type="protein sequence ID" value="GAT95537"/>
    <property type="gene ID" value="CL6EHI_005950"/>
</dbReference>
<dbReference type="EnsemblProtists" id="rna_EHI_005950-1">
    <property type="protein sequence ID" value="rna_EHI_005950-1"/>
    <property type="gene ID" value="EHI_005950"/>
</dbReference>
<dbReference type="GeneID" id="3407725"/>
<dbReference type="KEGG" id="ehi:EHI_005950"/>
<dbReference type="VEuPathDB" id="AmoebaDB:EHI5A_136790"/>
<dbReference type="VEuPathDB" id="AmoebaDB:EHI5A_163770"/>
<dbReference type="VEuPathDB" id="AmoebaDB:EHI7A_112330"/>
<dbReference type="VEuPathDB" id="AmoebaDB:EHI8A_121620"/>
<dbReference type="VEuPathDB" id="AmoebaDB:EHI_005950"/>
<dbReference type="VEuPathDB" id="AmoebaDB:KM1_191480"/>
<dbReference type="VEuPathDB" id="AmoebaDB:KM1_210430"/>
<dbReference type="eggNOG" id="KOG1376">
    <property type="taxonomic scope" value="Eukaryota"/>
</dbReference>
<dbReference type="HOGENOM" id="CLU_015718_0_0_1"/>
<dbReference type="OMA" id="ESCYDIC"/>
<dbReference type="OrthoDB" id="1844at2759"/>
<dbReference type="Proteomes" id="UP000001926">
    <property type="component" value="Partially assembled WGS sequence"/>
</dbReference>
<dbReference type="GO" id="GO:0005737">
    <property type="term" value="C:cytoplasm"/>
    <property type="evidence" value="ECO:0000318"/>
    <property type="project" value="GO_Central"/>
</dbReference>
<dbReference type="GO" id="GO:0005874">
    <property type="term" value="C:microtubule"/>
    <property type="evidence" value="ECO:0000318"/>
    <property type="project" value="GO_Central"/>
</dbReference>
<dbReference type="GO" id="GO:0005525">
    <property type="term" value="F:GTP binding"/>
    <property type="evidence" value="ECO:0000318"/>
    <property type="project" value="GO_Central"/>
</dbReference>
<dbReference type="GO" id="GO:0016787">
    <property type="term" value="F:hydrolase activity"/>
    <property type="evidence" value="ECO:0007669"/>
    <property type="project" value="UniProtKB-KW"/>
</dbReference>
<dbReference type="GO" id="GO:0046872">
    <property type="term" value="F:metal ion binding"/>
    <property type="evidence" value="ECO:0007669"/>
    <property type="project" value="UniProtKB-KW"/>
</dbReference>
<dbReference type="GO" id="GO:0005200">
    <property type="term" value="F:structural constituent of cytoskeleton"/>
    <property type="evidence" value="ECO:0000318"/>
    <property type="project" value="GO_Central"/>
</dbReference>
<dbReference type="GO" id="GO:0000226">
    <property type="term" value="P:microtubule cytoskeleton organization"/>
    <property type="evidence" value="ECO:0000318"/>
    <property type="project" value="GO_Central"/>
</dbReference>
<dbReference type="GO" id="GO:0000278">
    <property type="term" value="P:mitotic cell cycle"/>
    <property type="evidence" value="ECO:0000318"/>
    <property type="project" value="GO_Central"/>
</dbReference>
<dbReference type="CDD" id="cd02186">
    <property type="entry name" value="alpha_tubulin"/>
    <property type="match status" value="1"/>
</dbReference>
<dbReference type="FunFam" id="3.40.50.1440:FF:000011">
    <property type="entry name" value="Tubulin alpha chain"/>
    <property type="match status" value="1"/>
</dbReference>
<dbReference type="Gene3D" id="1.10.287.600">
    <property type="entry name" value="Helix hairpin bin"/>
    <property type="match status" value="1"/>
</dbReference>
<dbReference type="Gene3D" id="3.30.1330.20">
    <property type="entry name" value="Tubulin/FtsZ, C-terminal domain"/>
    <property type="match status" value="1"/>
</dbReference>
<dbReference type="Gene3D" id="3.40.50.1440">
    <property type="entry name" value="Tubulin/FtsZ, GTPase domain"/>
    <property type="match status" value="1"/>
</dbReference>
<dbReference type="InterPro" id="IPR002452">
    <property type="entry name" value="Alpha_tubulin"/>
</dbReference>
<dbReference type="InterPro" id="IPR008280">
    <property type="entry name" value="Tub_FtsZ_C"/>
</dbReference>
<dbReference type="InterPro" id="IPR000217">
    <property type="entry name" value="Tubulin"/>
</dbReference>
<dbReference type="InterPro" id="IPR037103">
    <property type="entry name" value="Tubulin/FtsZ-like_C"/>
</dbReference>
<dbReference type="InterPro" id="IPR018316">
    <property type="entry name" value="Tubulin/FtsZ_2-layer-sand-dom"/>
</dbReference>
<dbReference type="InterPro" id="IPR036525">
    <property type="entry name" value="Tubulin/FtsZ_GTPase_sf"/>
</dbReference>
<dbReference type="InterPro" id="IPR023123">
    <property type="entry name" value="Tubulin_C"/>
</dbReference>
<dbReference type="InterPro" id="IPR017975">
    <property type="entry name" value="Tubulin_CS"/>
</dbReference>
<dbReference type="InterPro" id="IPR003008">
    <property type="entry name" value="Tubulin_FtsZ_GTPase"/>
</dbReference>
<dbReference type="PANTHER" id="PTHR11588">
    <property type="entry name" value="TUBULIN"/>
    <property type="match status" value="1"/>
</dbReference>
<dbReference type="Pfam" id="PF00091">
    <property type="entry name" value="Tubulin"/>
    <property type="match status" value="1"/>
</dbReference>
<dbReference type="Pfam" id="PF03953">
    <property type="entry name" value="Tubulin_C"/>
    <property type="match status" value="1"/>
</dbReference>
<dbReference type="PRINTS" id="PR01162">
    <property type="entry name" value="ALPHATUBULIN"/>
</dbReference>
<dbReference type="PRINTS" id="PR01161">
    <property type="entry name" value="TUBULIN"/>
</dbReference>
<dbReference type="SMART" id="SM00864">
    <property type="entry name" value="Tubulin"/>
    <property type="match status" value="1"/>
</dbReference>
<dbReference type="SMART" id="SM00865">
    <property type="entry name" value="Tubulin_C"/>
    <property type="match status" value="1"/>
</dbReference>
<dbReference type="SUPFAM" id="SSF55307">
    <property type="entry name" value="Tubulin C-terminal domain-like"/>
    <property type="match status" value="1"/>
</dbReference>
<dbReference type="SUPFAM" id="SSF52490">
    <property type="entry name" value="Tubulin nucleotide-binding domain-like"/>
    <property type="match status" value="1"/>
</dbReference>
<dbReference type="PROSITE" id="PS00227">
    <property type="entry name" value="TUBULIN"/>
    <property type="match status" value="1"/>
</dbReference>
<gene>
    <name evidence="2" type="primary">A-TUB</name>
    <name evidence="5" type="ORF">EHI_005950</name>
</gene>
<protein>
    <recommendedName>
        <fullName evidence="2">Tubulin alpha chain</fullName>
        <ecNumber evidence="1">3.6.5.-</ecNumber>
    </recommendedName>
</protein>